<keyword id="KW-0050">Antiport</keyword>
<keyword id="KW-0106">Calcium</keyword>
<keyword id="KW-0109">Calcium transport</keyword>
<keyword id="KW-0406">Ion transport</keyword>
<keyword id="KW-0472">Membrane</keyword>
<keyword id="KW-1185">Reference proteome</keyword>
<keyword id="KW-0812">Transmembrane</keyword>
<keyword id="KW-1133">Transmembrane helix</keyword>
<keyword id="KW-0813">Transport</keyword>
<keyword id="KW-0926">Vacuole</keyword>
<evidence type="ECO:0000255" key="1"/>
<evidence type="ECO:0000256" key="2">
    <source>
        <dbReference type="SAM" id="MobiDB-lite"/>
    </source>
</evidence>
<evidence type="ECO:0000269" key="3">
    <source>
    </source>
</evidence>
<evidence type="ECO:0000305" key="4"/>
<proteinExistence type="evidence at transcript level"/>
<reference key="1">
    <citation type="journal article" date="2005" name="Genome Res.">
        <title>Sequence, annotation, and analysis of synteny between rice chromosome 3 and diverged grass species.</title>
        <authorList>
            <consortium name="The rice chromosome 3 sequencing consortium"/>
            <person name="Buell C.R."/>
            <person name="Yuan Q."/>
            <person name="Ouyang S."/>
            <person name="Liu J."/>
            <person name="Zhu W."/>
            <person name="Wang A."/>
            <person name="Maiti R."/>
            <person name="Haas B."/>
            <person name="Wortman J."/>
            <person name="Pertea M."/>
            <person name="Jones K.M."/>
            <person name="Kim M."/>
            <person name="Overton L."/>
            <person name="Tsitrin T."/>
            <person name="Fadrosh D."/>
            <person name="Bera J."/>
            <person name="Weaver B."/>
            <person name="Jin S."/>
            <person name="Johri S."/>
            <person name="Reardon M."/>
            <person name="Webb K."/>
            <person name="Hill J."/>
            <person name="Moffat K."/>
            <person name="Tallon L."/>
            <person name="Van Aken S."/>
            <person name="Lewis M."/>
            <person name="Utterback T."/>
            <person name="Feldblyum T."/>
            <person name="Zismann V."/>
            <person name="Iobst S."/>
            <person name="Hsiao J."/>
            <person name="de Vazeille A.R."/>
            <person name="Salzberg S.L."/>
            <person name="White O."/>
            <person name="Fraser C.M."/>
            <person name="Yu Y."/>
            <person name="Kim H."/>
            <person name="Rambo T."/>
            <person name="Currie J."/>
            <person name="Collura K."/>
            <person name="Kernodle-Thompson S."/>
            <person name="Wei F."/>
            <person name="Kudrna K."/>
            <person name="Ammiraju J.S.S."/>
            <person name="Luo M."/>
            <person name="Goicoechea J.L."/>
            <person name="Wing R.A."/>
            <person name="Henry D."/>
            <person name="Oates R."/>
            <person name="Palmer M."/>
            <person name="Pries G."/>
            <person name="Saski C."/>
            <person name="Simmons J."/>
            <person name="Soderlund C."/>
            <person name="Nelson W."/>
            <person name="de la Bastide M."/>
            <person name="Spiegel L."/>
            <person name="Nascimento L."/>
            <person name="Huang E."/>
            <person name="Preston R."/>
            <person name="Zutavern T."/>
            <person name="Palmer L."/>
            <person name="O'Shaughnessy A."/>
            <person name="Dike S."/>
            <person name="McCombie W.R."/>
            <person name="Minx P."/>
            <person name="Cordum H."/>
            <person name="Wilson R."/>
            <person name="Jin W."/>
            <person name="Lee H.R."/>
            <person name="Jiang J."/>
            <person name="Jackson S."/>
        </authorList>
    </citation>
    <scope>NUCLEOTIDE SEQUENCE [LARGE SCALE GENOMIC DNA]</scope>
    <source>
        <strain>cv. Nipponbare</strain>
    </source>
</reference>
<reference key="2">
    <citation type="journal article" date="2005" name="Nature">
        <title>The map-based sequence of the rice genome.</title>
        <authorList>
            <consortium name="International rice genome sequencing project (IRGSP)"/>
        </authorList>
    </citation>
    <scope>NUCLEOTIDE SEQUENCE [LARGE SCALE GENOMIC DNA]</scope>
    <source>
        <strain>cv. Nipponbare</strain>
    </source>
</reference>
<reference key="3">
    <citation type="journal article" date="2008" name="Nucleic Acids Res.">
        <title>The rice annotation project database (RAP-DB): 2008 update.</title>
        <authorList>
            <consortium name="The rice annotation project (RAP)"/>
        </authorList>
    </citation>
    <scope>GENOME REANNOTATION</scope>
    <source>
        <strain>cv. Nipponbare</strain>
    </source>
</reference>
<reference key="4">
    <citation type="journal article" date="2013" name="Rice">
        <title>Improvement of the Oryza sativa Nipponbare reference genome using next generation sequence and optical map data.</title>
        <authorList>
            <person name="Kawahara Y."/>
            <person name="de la Bastide M."/>
            <person name="Hamilton J.P."/>
            <person name="Kanamori H."/>
            <person name="McCombie W.R."/>
            <person name="Ouyang S."/>
            <person name="Schwartz D.C."/>
            <person name="Tanaka T."/>
            <person name="Wu J."/>
            <person name="Zhou S."/>
            <person name="Childs K.L."/>
            <person name="Davidson R.M."/>
            <person name="Lin H."/>
            <person name="Quesada-Ocampo L."/>
            <person name="Vaillancourt B."/>
            <person name="Sakai H."/>
            <person name="Lee S.S."/>
            <person name="Kim J."/>
            <person name="Numa H."/>
            <person name="Itoh T."/>
            <person name="Buell C.R."/>
            <person name="Matsumoto T."/>
        </authorList>
    </citation>
    <scope>GENOME REANNOTATION</scope>
    <source>
        <strain>cv. Nipponbare</strain>
    </source>
</reference>
<reference key="5">
    <citation type="journal article" date="2003" name="Science">
        <title>Collection, mapping, and annotation of over 28,000 cDNA clones from japonica rice.</title>
        <authorList>
            <consortium name="The rice full-length cDNA consortium"/>
        </authorList>
    </citation>
    <scope>NUCLEOTIDE SEQUENCE [LARGE SCALE MRNA]</scope>
    <source>
        <strain>cv. Nipponbare</strain>
    </source>
</reference>
<reference key="6">
    <citation type="journal article" date="2005" name="Plant Cell Physiol.">
        <title>Expression profile of the genes for rice cation/h+ exchanger family and functional analysis in yeast.</title>
        <authorList>
            <person name="Kamiya T."/>
            <person name="Akahori T."/>
            <person name="Maeshima M."/>
        </authorList>
    </citation>
    <scope>NUCLEOTIDE SEQUENCE [MRNA] OF 23-437</scope>
    <scope>FUNCTION</scope>
    <scope>TISSUE SPECIFICITY</scope>
</reference>
<dbReference type="EMBL" id="AC091787">
    <property type="protein sequence ID" value="AAP12929.1"/>
    <property type="status" value="ALT_SEQ"/>
    <property type="molecule type" value="Genomic_DNA"/>
</dbReference>
<dbReference type="EMBL" id="AC091787">
    <property type="protein sequence ID" value="AAW39029.1"/>
    <property type="molecule type" value="Genomic_DNA"/>
</dbReference>
<dbReference type="EMBL" id="AC091787">
    <property type="protein sequence ID" value="AAW39030.1"/>
    <property type="status" value="ALT_SEQ"/>
    <property type="molecule type" value="Genomic_DNA"/>
</dbReference>
<dbReference type="EMBL" id="DP000009">
    <property type="protein sequence ID" value="ABF96432.1"/>
    <property type="molecule type" value="Genomic_DNA"/>
</dbReference>
<dbReference type="EMBL" id="AP008209">
    <property type="protein sequence ID" value="BAF12215.1"/>
    <property type="molecule type" value="Genomic_DNA"/>
</dbReference>
<dbReference type="EMBL" id="AP014959">
    <property type="protein sequence ID" value="BAS84573.1"/>
    <property type="molecule type" value="Genomic_DNA"/>
</dbReference>
<dbReference type="EMBL" id="AK069928">
    <property type="protein sequence ID" value="BAG91683.1"/>
    <property type="molecule type" value="mRNA"/>
</dbReference>
<dbReference type="EMBL" id="AB112772">
    <property type="protein sequence ID" value="BAD83662.1"/>
    <property type="status" value="ALT_INIT"/>
    <property type="molecule type" value="mRNA"/>
</dbReference>
<dbReference type="RefSeq" id="XP_015627891.1">
    <property type="nucleotide sequence ID" value="XM_015772405.1"/>
</dbReference>
<dbReference type="RefSeq" id="XP_015627892.1">
    <property type="nucleotide sequence ID" value="XM_015772406.1"/>
</dbReference>
<dbReference type="SMR" id="Q5KQN0"/>
<dbReference type="FunCoup" id="Q5KQN0">
    <property type="interactions" value="112"/>
</dbReference>
<dbReference type="STRING" id="39947.Q5KQN0"/>
<dbReference type="PaxDb" id="39947-Q5KQN0"/>
<dbReference type="EnsemblPlants" id="Os03t0397400-01">
    <property type="protein sequence ID" value="Os03t0397400-01"/>
    <property type="gene ID" value="Os03g0397400"/>
</dbReference>
<dbReference type="Gramene" id="Os03t0397400-01">
    <property type="protein sequence ID" value="Os03t0397400-01"/>
    <property type="gene ID" value="Os03g0397400"/>
</dbReference>
<dbReference type="KEGG" id="dosa:Os03g0397400"/>
<dbReference type="eggNOG" id="KOG1397">
    <property type="taxonomic scope" value="Eukaryota"/>
</dbReference>
<dbReference type="HOGENOM" id="CLU_008721_2_0_1"/>
<dbReference type="InParanoid" id="Q5KQN0"/>
<dbReference type="OMA" id="WNPFRHV"/>
<dbReference type="OrthoDB" id="1699231at2759"/>
<dbReference type="Proteomes" id="UP000000763">
    <property type="component" value="Chromosome 3"/>
</dbReference>
<dbReference type="Proteomes" id="UP000059680">
    <property type="component" value="Chromosome 3"/>
</dbReference>
<dbReference type="GO" id="GO:0009705">
    <property type="term" value="C:plant-type vacuole membrane"/>
    <property type="evidence" value="ECO:0000318"/>
    <property type="project" value="GO_Central"/>
</dbReference>
<dbReference type="GO" id="GO:0015369">
    <property type="term" value="F:calcium:proton antiporter activity"/>
    <property type="evidence" value="ECO:0000318"/>
    <property type="project" value="GO_Central"/>
</dbReference>
<dbReference type="GO" id="GO:0070588">
    <property type="term" value="P:calcium ion transmembrane transport"/>
    <property type="evidence" value="ECO:0000318"/>
    <property type="project" value="GO_Central"/>
</dbReference>
<dbReference type="GO" id="GO:0006874">
    <property type="term" value="P:intracellular calcium ion homeostasis"/>
    <property type="evidence" value="ECO:0000318"/>
    <property type="project" value="GO_Central"/>
</dbReference>
<dbReference type="FunFam" id="1.20.1420.30:FF:000008">
    <property type="entry name" value="Vacuolar cation/proton exchanger"/>
    <property type="match status" value="1"/>
</dbReference>
<dbReference type="FunFam" id="1.20.1420.30:FF:000012">
    <property type="entry name" value="Vacuolar cation/proton exchanger"/>
    <property type="match status" value="1"/>
</dbReference>
<dbReference type="Gene3D" id="1.20.1420.30">
    <property type="entry name" value="NCX, central ion-binding region"/>
    <property type="match status" value="2"/>
</dbReference>
<dbReference type="InterPro" id="IPR004713">
    <property type="entry name" value="CaH_exchang"/>
</dbReference>
<dbReference type="InterPro" id="IPR004798">
    <property type="entry name" value="CAX-like"/>
</dbReference>
<dbReference type="InterPro" id="IPR004837">
    <property type="entry name" value="NaCa_Exmemb"/>
</dbReference>
<dbReference type="InterPro" id="IPR044880">
    <property type="entry name" value="NCX_ion-bd_dom_sf"/>
</dbReference>
<dbReference type="NCBIfam" id="TIGR00846">
    <property type="entry name" value="caca2"/>
    <property type="match status" value="1"/>
</dbReference>
<dbReference type="NCBIfam" id="TIGR00378">
    <property type="entry name" value="cax"/>
    <property type="match status" value="1"/>
</dbReference>
<dbReference type="PANTHER" id="PTHR31503">
    <property type="entry name" value="VACUOLAR CALCIUM ION TRANSPORTER"/>
    <property type="match status" value="1"/>
</dbReference>
<dbReference type="PANTHER" id="PTHR31503:SF22">
    <property type="entry name" value="VACUOLAR CALCIUM ION TRANSPORTER"/>
    <property type="match status" value="1"/>
</dbReference>
<dbReference type="Pfam" id="PF01699">
    <property type="entry name" value="Na_Ca_ex"/>
    <property type="match status" value="2"/>
</dbReference>
<sequence>MMGAEKAEGMEELELEEGGGSPSPSPMTAAGKMQALDFEHIGSLAAVAESLSTGSKWRRALTSVRVVILQAKINVLLPFGPLAVMLHYLSANHQGWVFLFSLIGITPLAERLGYATEQLALYTGPTIGGLLNATFGNATEMIISLYALKNGMIRVVQQSLLGSILSNMLLVLGCAFFAGGLVHPSRDQVFNKASAVVNSGLLLMAVLGLMFPAVLHFTHSEVQYGKSEVSLSRFSSCIMLVAYASYLFFQLKSQRSLYSPIGEQEEEVTEDEEEEKEITQGEAICWLFVLTIWISILSGYLVDAIQGASESLNMPVAFISVILLPIVGNAAEHASAIMFAMKDKLDITLGVAIGSSTQISMFVIPFCVVIGWIMGQQMDLNFQLFETATLFITVLVVAFMLQEGTSNYFKGLMLILCYLIVAASFFVHVDPDSSNNK</sequence>
<feature type="chain" id="PRO_0000209500" description="Vacuolar cation/proton exchanger 2">
    <location>
        <begin position="1"/>
        <end position="437"/>
    </location>
</feature>
<feature type="topological domain" description="Cytoplasmic" evidence="1">
    <location>
        <begin position="1"/>
        <end position="65"/>
    </location>
</feature>
<feature type="transmembrane region" description="Helical" evidence="1">
    <location>
        <begin position="66"/>
        <end position="86"/>
    </location>
</feature>
<feature type="topological domain" description="Extracellular" evidence="1">
    <location>
        <begin position="87"/>
        <end position="88"/>
    </location>
</feature>
<feature type="transmembrane region" description="Helical" evidence="1">
    <location>
        <begin position="89"/>
        <end position="109"/>
    </location>
</feature>
<feature type="topological domain" description="Cytoplasmic" evidence="1">
    <location>
        <begin position="110"/>
        <end position="126"/>
    </location>
</feature>
<feature type="transmembrane region" description="Helical" evidence="1">
    <location>
        <begin position="127"/>
        <end position="147"/>
    </location>
</feature>
<feature type="topological domain" description="Extracellular" evidence="1">
    <location>
        <begin position="148"/>
        <end position="161"/>
    </location>
</feature>
<feature type="transmembrane region" description="Helical" evidence="1">
    <location>
        <begin position="162"/>
        <end position="182"/>
    </location>
</feature>
<feature type="topological domain" description="Cytoplasmic" evidence="1">
    <location>
        <begin position="183"/>
        <end position="194"/>
    </location>
</feature>
<feature type="transmembrane region" description="Helical" evidence="1">
    <location>
        <begin position="195"/>
        <end position="215"/>
    </location>
</feature>
<feature type="topological domain" description="Extracellular" evidence="1">
    <location>
        <begin position="216"/>
        <end position="228"/>
    </location>
</feature>
<feature type="transmembrane region" description="Helical" evidence="1">
    <location>
        <begin position="229"/>
        <end position="249"/>
    </location>
</feature>
<feature type="topological domain" description="Cytoplasmic" evidence="1">
    <location>
        <begin position="250"/>
        <end position="281"/>
    </location>
</feature>
<feature type="transmembrane region" description="Helical" evidence="1">
    <location>
        <begin position="282"/>
        <end position="302"/>
    </location>
</feature>
<feature type="topological domain" description="Extracellular" evidence="1">
    <location>
        <begin position="303"/>
        <end position="310"/>
    </location>
</feature>
<feature type="transmembrane region" description="Helical" evidence="1">
    <location>
        <begin position="311"/>
        <end position="331"/>
    </location>
</feature>
<feature type="topological domain" description="Cytoplasmic" evidence="1">
    <location>
        <begin position="332"/>
        <end position="352"/>
    </location>
</feature>
<feature type="transmembrane region" description="Helical" evidence="1">
    <location>
        <begin position="353"/>
        <end position="373"/>
    </location>
</feature>
<feature type="topological domain" description="Extracellular" evidence="1">
    <location>
        <begin position="374"/>
        <end position="379"/>
    </location>
</feature>
<feature type="transmembrane region" description="Helical" evidence="1">
    <location>
        <begin position="380"/>
        <end position="400"/>
    </location>
</feature>
<feature type="topological domain" description="Cytoplasmic" evidence="1">
    <location>
        <begin position="401"/>
        <end position="408"/>
    </location>
</feature>
<feature type="transmembrane region" description="Helical" evidence="1">
    <location>
        <begin position="409"/>
        <end position="429"/>
    </location>
</feature>
<feature type="topological domain" description="Extracellular" evidence="1">
    <location>
        <begin position="430"/>
        <end position="437"/>
    </location>
</feature>
<feature type="region of interest" description="Disordered" evidence="2">
    <location>
        <begin position="1"/>
        <end position="29"/>
    </location>
</feature>
<feature type="region of interest" description="Cation selection" evidence="1">
    <location>
        <begin position="136"/>
        <end position="171"/>
    </location>
</feature>
<feature type="region of interest" description="Cation selection" evidence="1">
    <location>
        <begin position="328"/>
        <end position="363"/>
    </location>
</feature>
<comment type="function">
    <text evidence="3">Vacuolar cation/proton exchanger (CAX). Translocates Ca(2+) and other metal ions into vacuoles using the proton gradient formed by H(+)-ATPase and H(+)-pyrophosphatase.</text>
</comment>
<comment type="subcellular location">
    <subcellularLocation>
        <location evidence="4">Vacuole membrane</location>
        <topology evidence="4">Multi-pass membrane protein</topology>
    </subcellularLocation>
    <text>Tonoplast.</text>
</comment>
<comment type="tissue specificity">
    <text evidence="3">Expressed in roots and shoots.</text>
</comment>
<comment type="similarity">
    <text evidence="4">Belongs to the Ca(2+):cation antiporter (CaCA) (TC 2.A.19) family. Cation/proton exchanger (CAX) subfamily.</text>
</comment>
<comment type="sequence caution" evidence="4">
    <conflict type="erroneous gene model prediction">
        <sequence resource="EMBL-CDS" id="AAP12929"/>
    </conflict>
</comment>
<comment type="sequence caution" evidence="4">
    <conflict type="erroneous gene model prediction">
        <sequence resource="EMBL-CDS" id="AAW39030"/>
    </conflict>
</comment>
<comment type="sequence caution" evidence="4">
    <conflict type="erroneous initiation">
        <sequence resource="EMBL-CDS" id="BAD83662"/>
    </conflict>
    <text>Truncated N-terminus.</text>
</comment>
<organism>
    <name type="scientific">Oryza sativa subsp. japonica</name>
    <name type="common">Rice</name>
    <dbReference type="NCBI Taxonomy" id="39947"/>
    <lineage>
        <taxon>Eukaryota</taxon>
        <taxon>Viridiplantae</taxon>
        <taxon>Streptophyta</taxon>
        <taxon>Embryophyta</taxon>
        <taxon>Tracheophyta</taxon>
        <taxon>Spermatophyta</taxon>
        <taxon>Magnoliopsida</taxon>
        <taxon>Liliopsida</taxon>
        <taxon>Poales</taxon>
        <taxon>Poaceae</taxon>
        <taxon>BOP clade</taxon>
        <taxon>Oryzoideae</taxon>
        <taxon>Oryzeae</taxon>
        <taxon>Oryzinae</taxon>
        <taxon>Oryza</taxon>
        <taxon>Oryza sativa</taxon>
    </lineage>
</organism>
<accession>Q5KQN0</accession>
<accession>A0A0P0VZA2</accession>
<accession>Q10K42</accession>
<accession>Q5KQN1</accession>
<accession>Q5KTQ8</accession>
<accession>Q84MW3</accession>
<protein>
    <recommendedName>
        <fullName>Vacuolar cation/proton exchanger 2</fullName>
    </recommendedName>
    <alternativeName>
        <fullName>Ca(2+)/H(+) exchanger 2</fullName>
    </alternativeName>
    <alternativeName>
        <fullName>OsCAX2</fullName>
    </alternativeName>
</protein>
<name>CAX2_ORYSJ</name>
<gene>
    <name type="primary">CAX2</name>
    <name type="ordered locus">Os03g0397400</name>
    <name type="ordered locus">LOC_Os03g27960</name>
</gene>